<feature type="chain" id="PRO_0000314132" description="Transcription and mRNA export factor ENY2">
    <location>
        <begin position="1"/>
        <end position="95"/>
    </location>
</feature>
<reference key="1">
    <citation type="submission" date="2004-07" db="EMBL/GenBank/DDBJ databases">
        <authorList>
            <consortium name="NIH - Zebrafish Gene Collection (ZGC) project"/>
        </authorList>
    </citation>
    <scope>NUCLEOTIDE SEQUENCE [LARGE SCALE MRNA]</scope>
    <source>
        <tissue>Eye</tissue>
    </source>
</reference>
<gene>
    <name type="primary">eny2</name>
    <name type="ORF">zgc:92656</name>
</gene>
<organism>
    <name type="scientific">Danio rerio</name>
    <name type="common">Zebrafish</name>
    <name type="synonym">Brachydanio rerio</name>
    <dbReference type="NCBI Taxonomy" id="7955"/>
    <lineage>
        <taxon>Eukaryota</taxon>
        <taxon>Metazoa</taxon>
        <taxon>Chordata</taxon>
        <taxon>Craniata</taxon>
        <taxon>Vertebrata</taxon>
        <taxon>Euteleostomi</taxon>
        <taxon>Actinopterygii</taxon>
        <taxon>Neopterygii</taxon>
        <taxon>Teleostei</taxon>
        <taxon>Ostariophysi</taxon>
        <taxon>Cypriniformes</taxon>
        <taxon>Danionidae</taxon>
        <taxon>Danioninae</taxon>
        <taxon>Danio</taxon>
    </lineage>
</organism>
<protein>
    <recommendedName>
        <fullName evidence="2">Transcription and mRNA export factor ENY2</fullName>
    </recommendedName>
    <alternativeName>
        <fullName evidence="2">Enhancer of yellow 2 transcription factor homolog</fullName>
    </alternativeName>
</protein>
<comment type="function">
    <text evidence="1">Involved in mRNA export coupled transcription activation by association with both the TREX-2 and the SAGA complexes. The transcription regulatory histone acetylation (HAT) complex SAGA is a multiprotein complex that activates transcription by remodeling chromatin and mediating histone acetylation and deubiquitination. Within the SAGA complex, participates in a subcomplex that specifically deubiquitinates histones. The SAGA complex is recruited to specific gene promoters by activators, where it is required for transcription. The TREX-2 complex functions in docking export-competent ribonucleoprotein particles (mRNPs) to the nuclear entrance of the nuclear pore complex (nuclear basket). TREX-2 participates in mRNA export and accurate chromatin positioning in the nucleus by tethering genes to the nuclear periphery (By similarity).</text>
</comment>
<comment type="subunit">
    <text evidence="1">Component of the nuclear pore complex (NPC)-associated TREX-2 complex (transcription and export complex 2). Component of the SAGA transcription coactivator-HAT complex. Within the SAGA complex, participates in a subcomplex of SAGA called the DUB module (deubiquitination module) (By similarity).</text>
</comment>
<comment type="subcellular location">
    <subcellularLocation>
        <location evidence="2">Nucleus</location>
        <location evidence="2">Nucleoplasm</location>
    </subcellularLocation>
</comment>
<comment type="similarity">
    <text evidence="2">Belongs to the ENY2 family.</text>
</comment>
<name>ENY2_DANRE</name>
<proteinExistence type="inferred from homology"/>
<keyword id="KW-0010">Activator</keyword>
<keyword id="KW-0156">Chromatin regulator</keyword>
<keyword id="KW-0509">mRNA transport</keyword>
<keyword id="KW-0539">Nucleus</keyword>
<keyword id="KW-0653">Protein transport</keyword>
<keyword id="KW-1185">Reference proteome</keyword>
<keyword id="KW-0804">Transcription</keyword>
<keyword id="KW-0805">Transcription regulation</keyword>
<keyword id="KW-0811">Translocation</keyword>
<keyword id="KW-0813">Transport</keyword>
<sequence>MSKESQMRAAINQKLIEMGERERLKELLRAKLIECGWRDQLKALCKEVIKEKGIENVTVEDLVAGVTPKGRALVPDSVKKELLQRIRAFLAQHST</sequence>
<accession>Q6DH42</accession>
<evidence type="ECO:0000250" key="1"/>
<evidence type="ECO:0000255" key="2">
    <source>
        <dbReference type="HAMAP-Rule" id="MF_03046"/>
    </source>
</evidence>
<dbReference type="EMBL" id="BC076140">
    <property type="protein sequence ID" value="AAH76140.1"/>
    <property type="molecule type" value="mRNA"/>
</dbReference>
<dbReference type="RefSeq" id="NP_001002427.1">
    <property type="nucleotide sequence ID" value="NM_001002427.2"/>
</dbReference>
<dbReference type="SMR" id="Q6DH42"/>
<dbReference type="FunCoup" id="Q6DH42">
    <property type="interactions" value="1886"/>
</dbReference>
<dbReference type="STRING" id="7955.ENSDARP00000093259"/>
<dbReference type="PaxDb" id="7955-ENSDARP00000115433"/>
<dbReference type="Ensembl" id="ENSDART00000102482">
    <property type="protein sequence ID" value="ENSDARP00000093259"/>
    <property type="gene ID" value="ENSDARG00000070046"/>
</dbReference>
<dbReference type="Ensembl" id="ENSDART00000136215">
    <property type="protein sequence ID" value="ENSDARP00000115433"/>
    <property type="gene ID" value="ENSDARG00000070046"/>
</dbReference>
<dbReference type="GeneID" id="436700"/>
<dbReference type="KEGG" id="dre:436700"/>
<dbReference type="AGR" id="ZFIN:ZDB-GENE-040718-124"/>
<dbReference type="CTD" id="56943"/>
<dbReference type="ZFIN" id="ZDB-GENE-040718-124">
    <property type="gene designation" value="eny2"/>
</dbReference>
<dbReference type="eggNOG" id="KOG4479">
    <property type="taxonomic scope" value="Eukaryota"/>
</dbReference>
<dbReference type="HOGENOM" id="CLU_134052_1_1_1"/>
<dbReference type="InParanoid" id="Q6DH42"/>
<dbReference type="OMA" id="RLMCRNI"/>
<dbReference type="OrthoDB" id="6221744at2759"/>
<dbReference type="PhylomeDB" id="Q6DH42"/>
<dbReference type="TreeFam" id="TF326556"/>
<dbReference type="PRO" id="PR:Q6DH42"/>
<dbReference type="Proteomes" id="UP000000437">
    <property type="component" value="Chromosome 16"/>
</dbReference>
<dbReference type="Bgee" id="ENSDARG00000070046">
    <property type="expression patterns" value="Expressed in mature ovarian follicle and 28 other cell types or tissues"/>
</dbReference>
<dbReference type="GO" id="GO:0071819">
    <property type="term" value="C:DUBm complex"/>
    <property type="evidence" value="ECO:0000318"/>
    <property type="project" value="GO_Central"/>
</dbReference>
<dbReference type="GO" id="GO:0005643">
    <property type="term" value="C:nuclear pore"/>
    <property type="evidence" value="ECO:0007669"/>
    <property type="project" value="UniProtKB-UniRule"/>
</dbReference>
<dbReference type="GO" id="GO:0005654">
    <property type="term" value="C:nucleoplasm"/>
    <property type="evidence" value="ECO:0007669"/>
    <property type="project" value="UniProtKB-SubCell"/>
</dbReference>
<dbReference type="GO" id="GO:0000124">
    <property type="term" value="C:SAGA complex"/>
    <property type="evidence" value="ECO:0000250"/>
    <property type="project" value="UniProtKB"/>
</dbReference>
<dbReference type="GO" id="GO:0070390">
    <property type="term" value="C:transcription export complex 2"/>
    <property type="evidence" value="ECO:0007669"/>
    <property type="project" value="UniProtKB-UniRule"/>
</dbReference>
<dbReference type="GO" id="GO:0003682">
    <property type="term" value="F:chromatin binding"/>
    <property type="evidence" value="ECO:0000318"/>
    <property type="project" value="GO_Central"/>
</dbReference>
<dbReference type="GO" id="GO:0003713">
    <property type="term" value="F:transcription coactivator activity"/>
    <property type="evidence" value="ECO:0000250"/>
    <property type="project" value="UniProtKB"/>
</dbReference>
<dbReference type="GO" id="GO:0006325">
    <property type="term" value="P:chromatin organization"/>
    <property type="evidence" value="ECO:0007669"/>
    <property type="project" value="UniProtKB-KW"/>
</dbReference>
<dbReference type="GO" id="GO:0016973">
    <property type="term" value="P:poly(A)+ mRNA export from nucleus"/>
    <property type="evidence" value="ECO:0000318"/>
    <property type="project" value="GO_Central"/>
</dbReference>
<dbReference type="GO" id="GO:0045893">
    <property type="term" value="P:positive regulation of DNA-templated transcription"/>
    <property type="evidence" value="ECO:0000250"/>
    <property type="project" value="UniProtKB"/>
</dbReference>
<dbReference type="GO" id="GO:0015031">
    <property type="term" value="P:protein transport"/>
    <property type="evidence" value="ECO:0007669"/>
    <property type="project" value="UniProtKB-KW"/>
</dbReference>
<dbReference type="GO" id="GO:0006357">
    <property type="term" value="P:regulation of transcription by RNA polymerase II"/>
    <property type="evidence" value="ECO:0000318"/>
    <property type="project" value="GO_Central"/>
</dbReference>
<dbReference type="GO" id="GO:0006368">
    <property type="term" value="P:transcription elongation by RNA polymerase II"/>
    <property type="evidence" value="ECO:0007669"/>
    <property type="project" value="UniProtKB-UniRule"/>
</dbReference>
<dbReference type="FunFam" id="1.10.246.140:FF:000001">
    <property type="entry name" value="Transcription and mRNA export factor ENY2"/>
    <property type="match status" value="1"/>
</dbReference>
<dbReference type="Gene3D" id="1.10.246.140">
    <property type="match status" value="1"/>
</dbReference>
<dbReference type="HAMAP" id="MF_03046">
    <property type="entry name" value="ENY2_Sus1"/>
    <property type="match status" value="1"/>
</dbReference>
<dbReference type="InterPro" id="IPR018783">
    <property type="entry name" value="TF_ENY2"/>
</dbReference>
<dbReference type="InterPro" id="IPR038212">
    <property type="entry name" value="TF_EnY2_sf"/>
</dbReference>
<dbReference type="PANTHER" id="PTHR12514">
    <property type="entry name" value="ENHANCER OF YELLOW 2 TRANSCRIPTION FACTOR"/>
    <property type="match status" value="1"/>
</dbReference>
<dbReference type="Pfam" id="PF10163">
    <property type="entry name" value="EnY2"/>
    <property type="match status" value="1"/>
</dbReference>